<dbReference type="EMBL" id="AL646052">
    <property type="protein sequence ID" value="CAD16152.1"/>
    <property type="molecule type" value="Genomic_DNA"/>
</dbReference>
<dbReference type="RefSeq" id="WP_003262398.1">
    <property type="nucleotide sequence ID" value="NC_003295.1"/>
</dbReference>
<dbReference type="SMR" id="Q8XWM9"/>
<dbReference type="STRING" id="267608.RSc2445"/>
<dbReference type="EnsemblBacteria" id="CAD16152">
    <property type="protein sequence ID" value="CAD16152"/>
    <property type="gene ID" value="RSc2445"/>
</dbReference>
<dbReference type="GeneID" id="97320382"/>
<dbReference type="KEGG" id="rso:RSc2445"/>
<dbReference type="eggNOG" id="COG0227">
    <property type="taxonomic scope" value="Bacteria"/>
</dbReference>
<dbReference type="HOGENOM" id="CLU_064548_3_1_4"/>
<dbReference type="Proteomes" id="UP000001436">
    <property type="component" value="Chromosome"/>
</dbReference>
<dbReference type="GO" id="GO:0022625">
    <property type="term" value="C:cytosolic large ribosomal subunit"/>
    <property type="evidence" value="ECO:0007669"/>
    <property type="project" value="TreeGrafter"/>
</dbReference>
<dbReference type="GO" id="GO:0003735">
    <property type="term" value="F:structural constituent of ribosome"/>
    <property type="evidence" value="ECO:0007669"/>
    <property type="project" value="InterPro"/>
</dbReference>
<dbReference type="GO" id="GO:0006412">
    <property type="term" value="P:translation"/>
    <property type="evidence" value="ECO:0007669"/>
    <property type="project" value="UniProtKB-UniRule"/>
</dbReference>
<dbReference type="FunFam" id="2.30.170.40:FF:000001">
    <property type="entry name" value="50S ribosomal protein L28"/>
    <property type="match status" value="1"/>
</dbReference>
<dbReference type="Gene3D" id="2.30.170.40">
    <property type="entry name" value="Ribosomal protein L28/L24"/>
    <property type="match status" value="1"/>
</dbReference>
<dbReference type="HAMAP" id="MF_00373">
    <property type="entry name" value="Ribosomal_bL28"/>
    <property type="match status" value="1"/>
</dbReference>
<dbReference type="InterPro" id="IPR026569">
    <property type="entry name" value="Ribosomal_bL28"/>
</dbReference>
<dbReference type="InterPro" id="IPR034704">
    <property type="entry name" value="Ribosomal_bL28/bL31-like_sf"/>
</dbReference>
<dbReference type="InterPro" id="IPR001383">
    <property type="entry name" value="Ribosomal_bL28_bact-type"/>
</dbReference>
<dbReference type="InterPro" id="IPR037147">
    <property type="entry name" value="Ribosomal_bL28_sf"/>
</dbReference>
<dbReference type="NCBIfam" id="TIGR00009">
    <property type="entry name" value="L28"/>
    <property type="match status" value="1"/>
</dbReference>
<dbReference type="PANTHER" id="PTHR13528">
    <property type="entry name" value="39S RIBOSOMAL PROTEIN L28, MITOCHONDRIAL"/>
    <property type="match status" value="1"/>
</dbReference>
<dbReference type="PANTHER" id="PTHR13528:SF2">
    <property type="entry name" value="LARGE RIBOSOMAL SUBUNIT PROTEIN BL28M"/>
    <property type="match status" value="1"/>
</dbReference>
<dbReference type="Pfam" id="PF00830">
    <property type="entry name" value="Ribosomal_L28"/>
    <property type="match status" value="1"/>
</dbReference>
<dbReference type="SUPFAM" id="SSF143800">
    <property type="entry name" value="L28p-like"/>
    <property type="match status" value="1"/>
</dbReference>
<organism>
    <name type="scientific">Ralstonia nicotianae (strain ATCC BAA-1114 / GMI1000)</name>
    <name type="common">Ralstonia solanacearum</name>
    <dbReference type="NCBI Taxonomy" id="267608"/>
    <lineage>
        <taxon>Bacteria</taxon>
        <taxon>Pseudomonadati</taxon>
        <taxon>Pseudomonadota</taxon>
        <taxon>Betaproteobacteria</taxon>
        <taxon>Burkholderiales</taxon>
        <taxon>Burkholderiaceae</taxon>
        <taxon>Ralstonia</taxon>
        <taxon>Ralstonia solanacearum species complex</taxon>
    </lineage>
</organism>
<sequence length="77" mass="8788">MARVCQVTGKAPMVGNNVSHANNKTKRRFLPNLQNRRFWVESENRWVSLRVSNAGLRLIDKKGIDEVLADLRARGEV</sequence>
<gene>
    <name evidence="1" type="primary">rpmB</name>
    <name type="ordered locus">RSc2445</name>
    <name type="ORF">RS01349</name>
</gene>
<reference key="1">
    <citation type="journal article" date="2002" name="Nature">
        <title>Genome sequence of the plant pathogen Ralstonia solanacearum.</title>
        <authorList>
            <person name="Salanoubat M."/>
            <person name="Genin S."/>
            <person name="Artiguenave F."/>
            <person name="Gouzy J."/>
            <person name="Mangenot S."/>
            <person name="Arlat M."/>
            <person name="Billault A."/>
            <person name="Brottier P."/>
            <person name="Camus J.-C."/>
            <person name="Cattolico L."/>
            <person name="Chandler M."/>
            <person name="Choisne N."/>
            <person name="Claudel-Renard C."/>
            <person name="Cunnac S."/>
            <person name="Demange N."/>
            <person name="Gaspin C."/>
            <person name="Lavie M."/>
            <person name="Moisan A."/>
            <person name="Robert C."/>
            <person name="Saurin W."/>
            <person name="Schiex T."/>
            <person name="Siguier P."/>
            <person name="Thebault P."/>
            <person name="Whalen M."/>
            <person name="Wincker P."/>
            <person name="Levy M."/>
            <person name="Weissenbach J."/>
            <person name="Boucher C.A."/>
        </authorList>
    </citation>
    <scope>NUCLEOTIDE SEQUENCE [LARGE SCALE GENOMIC DNA]</scope>
    <source>
        <strain>ATCC BAA-1114 / GMI1000</strain>
    </source>
</reference>
<evidence type="ECO:0000255" key="1">
    <source>
        <dbReference type="HAMAP-Rule" id="MF_00373"/>
    </source>
</evidence>
<evidence type="ECO:0000305" key="2"/>
<proteinExistence type="inferred from homology"/>
<feature type="chain" id="PRO_0000178534" description="Large ribosomal subunit protein bL28">
    <location>
        <begin position="1"/>
        <end position="77"/>
    </location>
</feature>
<accession>Q8XWM9</accession>
<name>RL28_RALN1</name>
<comment type="similarity">
    <text evidence="1">Belongs to the bacterial ribosomal protein bL28 family.</text>
</comment>
<keyword id="KW-1185">Reference proteome</keyword>
<keyword id="KW-0687">Ribonucleoprotein</keyword>
<keyword id="KW-0689">Ribosomal protein</keyword>
<protein>
    <recommendedName>
        <fullName evidence="1">Large ribosomal subunit protein bL28</fullName>
    </recommendedName>
    <alternativeName>
        <fullName evidence="2">50S ribosomal protein L28</fullName>
    </alternativeName>
</protein>